<name>Y1157_METJA</name>
<sequence length="341" mass="40094">MLDSPHNLYIKKFMLCYIIYYFLICHLYNHIFNLREIMLCSCGNEAFYYQKYSNRHLCKECFKKDIERRAKKVLGKDIIRNNVKIGIGISGGKDSLVMAYILKELFKHIPNAKLICFFVDEGIKGFRNIAEKYVKEFCKEYNLDLKIIKFEDEIGYTLDEIVKNDYLSKLNIGKPCSFCGVVRRYLLNKHALKEGCDYLAIGHNLDDFCQTILMNYVEGNIKNIIQFGKEFEGGGFVKRIKPLKLIPEEEVKLYAEINNIKYQREPCPYSSLSYRHRMKKVIEILEEEKPGVKFSILRGYEKLLKYLNVKEEIRRCEICGFPCSGNICKVCSWLIKLKEIK</sequence>
<comment type="cofactor">
    <cofactor evidence="1">
        <name>[4Fe-4S] cluster</name>
        <dbReference type="ChEBI" id="CHEBI:49883"/>
    </cofactor>
    <text evidence="1">Binds 1 [4Fe-4S] cluster per subunit. The cluster is chelated by three Cys residues.</text>
</comment>
<comment type="cofactor">
    <cofactor evidence="1">
        <name>Mg(2+)</name>
        <dbReference type="ChEBI" id="CHEBI:18420"/>
    </cofactor>
</comment>
<comment type="similarity">
    <text evidence="2">Belongs to the TtcA family.</text>
</comment>
<protein>
    <recommendedName>
        <fullName evidence="2">Probable sulfurtransferase</fullName>
        <ecNumber evidence="2">2.8.1.-</ecNumber>
    </recommendedName>
</protein>
<proteinExistence type="inferred from homology"/>
<feature type="chain" id="PRO_0000219891" description="Probable sulfurtransferase">
    <location>
        <begin position="1"/>
        <end position="341"/>
    </location>
</feature>
<feature type="binding site" evidence="1">
    <location>
        <position position="40"/>
    </location>
    <ligand>
        <name>Zn(2+)</name>
        <dbReference type="ChEBI" id="CHEBI:29105"/>
        <label>1</label>
    </ligand>
</feature>
<feature type="binding site" evidence="1">
    <location>
        <position position="42"/>
    </location>
    <ligand>
        <name>Zn(2+)</name>
        <dbReference type="ChEBI" id="CHEBI:29105"/>
        <label>1</label>
    </ligand>
</feature>
<feature type="binding site" evidence="1">
    <location>
        <position position="58"/>
    </location>
    <ligand>
        <name>Zn(2+)</name>
        <dbReference type="ChEBI" id="CHEBI:29105"/>
        <label>1</label>
    </ligand>
</feature>
<feature type="binding site" evidence="1">
    <location>
        <position position="61"/>
    </location>
    <ligand>
        <name>Zn(2+)</name>
        <dbReference type="ChEBI" id="CHEBI:29105"/>
        <label>1</label>
    </ligand>
</feature>
<feature type="binding site" evidence="1">
    <location>
        <position position="88"/>
    </location>
    <ligand>
        <name>ATP</name>
        <dbReference type="ChEBI" id="CHEBI:30616"/>
    </ligand>
</feature>
<feature type="binding site" evidence="1">
    <location>
        <position position="176"/>
    </location>
    <ligand>
        <name>[4Fe-4S] cluster</name>
        <dbReference type="ChEBI" id="CHEBI:49883"/>
    </ligand>
</feature>
<feature type="binding site" evidence="1">
    <location>
        <position position="179"/>
    </location>
    <ligand>
        <name>[4Fe-4S] cluster</name>
        <dbReference type="ChEBI" id="CHEBI:49883"/>
    </ligand>
</feature>
<feature type="binding site" evidence="1">
    <location>
        <position position="183"/>
    </location>
    <ligand>
        <name>ATP</name>
        <dbReference type="ChEBI" id="CHEBI:30616"/>
    </ligand>
</feature>
<feature type="binding site" evidence="1">
    <location>
        <position position="202"/>
    </location>
    <ligand>
        <name>ATP</name>
        <dbReference type="ChEBI" id="CHEBI:30616"/>
    </ligand>
</feature>
<feature type="binding site" evidence="1">
    <location>
        <position position="267"/>
    </location>
    <ligand>
        <name>[4Fe-4S] cluster</name>
        <dbReference type="ChEBI" id="CHEBI:49883"/>
    </ligand>
</feature>
<feature type="binding site" evidence="1">
    <location>
        <position position="316"/>
    </location>
    <ligand>
        <name>Zn(2+)</name>
        <dbReference type="ChEBI" id="CHEBI:29105"/>
        <label>2</label>
    </ligand>
</feature>
<feature type="binding site" evidence="1">
    <location>
        <position position="319"/>
    </location>
    <ligand>
        <name>Zn(2+)</name>
        <dbReference type="ChEBI" id="CHEBI:29105"/>
        <label>2</label>
    </ligand>
</feature>
<feature type="binding site" evidence="1">
    <location>
        <position position="328"/>
    </location>
    <ligand>
        <name>Zn(2+)</name>
        <dbReference type="ChEBI" id="CHEBI:29105"/>
        <label>2</label>
    </ligand>
</feature>
<feature type="binding site" evidence="1">
    <location>
        <position position="331"/>
    </location>
    <ligand>
        <name>Zn(2+)</name>
        <dbReference type="ChEBI" id="CHEBI:29105"/>
        <label>2</label>
    </ligand>
</feature>
<keyword id="KW-0004">4Fe-4S</keyword>
<keyword id="KW-0067">ATP-binding</keyword>
<keyword id="KW-0408">Iron</keyword>
<keyword id="KW-0411">Iron-sulfur</keyword>
<keyword id="KW-0460">Magnesium</keyword>
<keyword id="KW-0479">Metal-binding</keyword>
<keyword id="KW-0547">Nucleotide-binding</keyword>
<keyword id="KW-1185">Reference proteome</keyword>
<keyword id="KW-0808">Transferase</keyword>
<keyword id="KW-0862">Zinc</keyword>
<reference key="1">
    <citation type="journal article" date="1996" name="Science">
        <title>Complete genome sequence of the methanogenic archaeon, Methanococcus jannaschii.</title>
        <authorList>
            <person name="Bult C.J."/>
            <person name="White O."/>
            <person name="Olsen G.J."/>
            <person name="Zhou L."/>
            <person name="Fleischmann R.D."/>
            <person name="Sutton G.G."/>
            <person name="Blake J.A."/>
            <person name="FitzGerald L.M."/>
            <person name="Clayton R.A."/>
            <person name="Gocayne J.D."/>
            <person name="Kerlavage A.R."/>
            <person name="Dougherty B.A."/>
            <person name="Tomb J.-F."/>
            <person name="Adams M.D."/>
            <person name="Reich C.I."/>
            <person name="Overbeek R."/>
            <person name="Kirkness E.F."/>
            <person name="Weinstock K.G."/>
            <person name="Merrick J.M."/>
            <person name="Glodek A."/>
            <person name="Scott J.L."/>
            <person name="Geoghagen N.S.M."/>
            <person name="Weidman J.F."/>
            <person name="Fuhrmann J.L."/>
            <person name="Nguyen D."/>
            <person name="Utterback T.R."/>
            <person name="Kelley J.M."/>
            <person name="Peterson J.D."/>
            <person name="Sadow P.W."/>
            <person name="Hanna M.C."/>
            <person name="Cotton M.D."/>
            <person name="Roberts K.M."/>
            <person name="Hurst M.A."/>
            <person name="Kaine B.P."/>
            <person name="Borodovsky M."/>
            <person name="Klenk H.-P."/>
            <person name="Fraser C.M."/>
            <person name="Smith H.O."/>
            <person name="Woese C.R."/>
            <person name="Venter J.C."/>
        </authorList>
    </citation>
    <scope>NUCLEOTIDE SEQUENCE [LARGE SCALE GENOMIC DNA]</scope>
    <source>
        <strain>ATCC 43067 / DSM 2661 / JAL-1 / JCM 10045 / NBRC 100440</strain>
    </source>
</reference>
<dbReference type="EC" id="2.8.1.-" evidence="2"/>
<dbReference type="EMBL" id="L77117">
    <property type="protein sequence ID" value="AAB99161.1"/>
    <property type="molecule type" value="Genomic_DNA"/>
</dbReference>
<dbReference type="PIR" id="E64444">
    <property type="entry name" value="E64444"/>
</dbReference>
<dbReference type="SMR" id="Q58558"/>
<dbReference type="FunCoup" id="Q58558">
    <property type="interactions" value="110"/>
</dbReference>
<dbReference type="STRING" id="243232.MJ_1157"/>
<dbReference type="PaxDb" id="243232-MJ_1157"/>
<dbReference type="DNASU" id="1452056"/>
<dbReference type="EnsemblBacteria" id="AAB99161">
    <property type="protein sequence ID" value="AAB99161"/>
    <property type="gene ID" value="MJ_1157"/>
</dbReference>
<dbReference type="KEGG" id="mja:MJ_1157"/>
<dbReference type="eggNOG" id="arCOG00042">
    <property type="taxonomic scope" value="Archaea"/>
</dbReference>
<dbReference type="HOGENOM" id="CLU_026481_1_2_2"/>
<dbReference type="InParanoid" id="Q58558"/>
<dbReference type="PhylomeDB" id="Q58558"/>
<dbReference type="Proteomes" id="UP000000805">
    <property type="component" value="Chromosome"/>
</dbReference>
<dbReference type="GO" id="GO:0002144">
    <property type="term" value="C:cytosolic tRNA wobble base thiouridylase complex"/>
    <property type="evidence" value="ECO:0000318"/>
    <property type="project" value="GO_Central"/>
</dbReference>
<dbReference type="GO" id="GO:0051539">
    <property type="term" value="F:4 iron, 4 sulfur cluster binding"/>
    <property type="evidence" value="ECO:0007669"/>
    <property type="project" value="UniProtKB-KW"/>
</dbReference>
<dbReference type="GO" id="GO:0005524">
    <property type="term" value="F:ATP binding"/>
    <property type="evidence" value="ECO:0007669"/>
    <property type="project" value="UniProtKB-KW"/>
</dbReference>
<dbReference type="GO" id="GO:0046872">
    <property type="term" value="F:metal ion binding"/>
    <property type="evidence" value="ECO:0007669"/>
    <property type="project" value="UniProtKB-KW"/>
</dbReference>
<dbReference type="GO" id="GO:0016740">
    <property type="term" value="F:transferase activity"/>
    <property type="evidence" value="ECO:0007669"/>
    <property type="project" value="UniProtKB-KW"/>
</dbReference>
<dbReference type="GO" id="GO:0000049">
    <property type="term" value="F:tRNA binding"/>
    <property type="evidence" value="ECO:0000318"/>
    <property type="project" value="GO_Central"/>
</dbReference>
<dbReference type="GO" id="GO:0002143">
    <property type="term" value="P:tRNA wobble position uridine thiolation"/>
    <property type="evidence" value="ECO:0000318"/>
    <property type="project" value="GO_Central"/>
</dbReference>
<dbReference type="CDD" id="cd01713">
    <property type="entry name" value="CTU1-like"/>
    <property type="match status" value="1"/>
</dbReference>
<dbReference type="FunFam" id="3.40.50.620:FF:000174">
    <property type="entry name" value="ATPase, PP-loop superfamily"/>
    <property type="match status" value="1"/>
</dbReference>
<dbReference type="Gene3D" id="3.40.50.620">
    <property type="entry name" value="HUPs"/>
    <property type="match status" value="1"/>
</dbReference>
<dbReference type="InterPro" id="IPR056369">
    <property type="entry name" value="CTU1-like_ATP-bd"/>
</dbReference>
<dbReference type="InterPro" id="IPR000541">
    <property type="entry name" value="Ncs6/Tuc1/Ctu1"/>
</dbReference>
<dbReference type="InterPro" id="IPR014729">
    <property type="entry name" value="Rossmann-like_a/b/a_fold"/>
</dbReference>
<dbReference type="InterPro" id="IPR011063">
    <property type="entry name" value="TilS/TtcA_N"/>
</dbReference>
<dbReference type="InterPro" id="IPR035107">
    <property type="entry name" value="tRNA_thiolation_TtcA_Ctu1"/>
</dbReference>
<dbReference type="InterPro" id="IPR054306">
    <property type="entry name" value="TtuA-like_LIM_N"/>
</dbReference>
<dbReference type="InterPro" id="IPR020554">
    <property type="entry name" value="UPF0021_CS"/>
</dbReference>
<dbReference type="NCBIfam" id="TIGR00269">
    <property type="entry name" value="TIGR00269 family protein"/>
    <property type="match status" value="1"/>
</dbReference>
<dbReference type="PANTHER" id="PTHR11807">
    <property type="entry name" value="ATPASES OF THE PP SUPERFAMILY-RELATED"/>
    <property type="match status" value="1"/>
</dbReference>
<dbReference type="PANTHER" id="PTHR11807:SF12">
    <property type="entry name" value="CYTOPLASMIC TRNA 2-THIOLATION PROTEIN 1"/>
    <property type="match status" value="1"/>
</dbReference>
<dbReference type="Pfam" id="PF01171">
    <property type="entry name" value="ATP_bind_3"/>
    <property type="match status" value="1"/>
</dbReference>
<dbReference type="Pfam" id="PF22082">
    <property type="entry name" value="TtuA_LIM_N"/>
    <property type="match status" value="1"/>
</dbReference>
<dbReference type="PIRSF" id="PIRSF004976">
    <property type="entry name" value="ATPase_YdaO"/>
    <property type="match status" value="1"/>
</dbReference>
<dbReference type="SUPFAM" id="SSF52402">
    <property type="entry name" value="Adenine nucleotide alpha hydrolases-like"/>
    <property type="match status" value="1"/>
</dbReference>
<dbReference type="PROSITE" id="PS01263">
    <property type="entry name" value="UPF0021"/>
    <property type="match status" value="1"/>
</dbReference>
<gene>
    <name type="ordered locus">MJ1157</name>
</gene>
<evidence type="ECO:0000250" key="1">
    <source>
        <dbReference type="UniProtKB" id="O58038"/>
    </source>
</evidence>
<evidence type="ECO:0000305" key="2"/>
<organism>
    <name type="scientific">Methanocaldococcus jannaschii (strain ATCC 43067 / DSM 2661 / JAL-1 / JCM 10045 / NBRC 100440)</name>
    <name type="common">Methanococcus jannaschii</name>
    <dbReference type="NCBI Taxonomy" id="243232"/>
    <lineage>
        <taxon>Archaea</taxon>
        <taxon>Methanobacteriati</taxon>
        <taxon>Methanobacteriota</taxon>
        <taxon>Methanomada group</taxon>
        <taxon>Methanococci</taxon>
        <taxon>Methanococcales</taxon>
        <taxon>Methanocaldococcaceae</taxon>
        <taxon>Methanocaldococcus</taxon>
    </lineage>
</organism>
<accession>Q58558</accession>